<reference key="1">
    <citation type="journal article" date="2003" name="Science">
        <title>Role of mobile DNA in the evolution of vancomycin-resistant Enterococcus faecalis.</title>
        <authorList>
            <person name="Paulsen I.T."/>
            <person name="Banerjei L."/>
            <person name="Myers G.S.A."/>
            <person name="Nelson K.E."/>
            <person name="Seshadri R."/>
            <person name="Read T.D."/>
            <person name="Fouts D.E."/>
            <person name="Eisen J.A."/>
            <person name="Gill S.R."/>
            <person name="Heidelberg J.F."/>
            <person name="Tettelin H."/>
            <person name="Dodson R.J."/>
            <person name="Umayam L.A."/>
            <person name="Brinkac L.M."/>
            <person name="Beanan M.J."/>
            <person name="Daugherty S.C."/>
            <person name="DeBoy R.T."/>
            <person name="Durkin S.A."/>
            <person name="Kolonay J.F."/>
            <person name="Madupu R."/>
            <person name="Nelson W.C."/>
            <person name="Vamathevan J.J."/>
            <person name="Tran B."/>
            <person name="Upton J."/>
            <person name="Hansen T."/>
            <person name="Shetty J."/>
            <person name="Khouri H.M."/>
            <person name="Utterback T.R."/>
            <person name="Radune D."/>
            <person name="Ketchum K.A."/>
            <person name="Dougherty B.A."/>
            <person name="Fraser C.M."/>
        </authorList>
    </citation>
    <scope>NUCLEOTIDE SEQUENCE [LARGE SCALE GENOMIC DNA]</scope>
    <source>
        <strain>ATCC 700802 / V583</strain>
    </source>
</reference>
<protein>
    <recommendedName>
        <fullName evidence="1">DNA-directed RNA polymerase subunit epsilon</fullName>
        <shortName evidence="1">RNAP epsilon subunit</shortName>
        <ecNumber evidence="1">2.7.7.6</ecNumber>
    </recommendedName>
    <alternativeName>
        <fullName evidence="1">RNA polymerase epsilon subunit</fullName>
    </alternativeName>
    <alternativeName>
        <fullName evidence="1">Transcriptase subunit epsilon</fullName>
    </alternativeName>
</protein>
<keyword id="KW-0240">DNA-directed RNA polymerase</keyword>
<keyword id="KW-0548">Nucleotidyltransferase</keyword>
<keyword id="KW-1185">Reference proteome</keyword>
<keyword id="KW-0804">Transcription</keyword>
<keyword id="KW-0808">Transferase</keyword>
<organism>
    <name type="scientific">Enterococcus faecalis (strain ATCC 700802 / V583)</name>
    <dbReference type="NCBI Taxonomy" id="226185"/>
    <lineage>
        <taxon>Bacteria</taxon>
        <taxon>Bacillati</taxon>
        <taxon>Bacillota</taxon>
        <taxon>Bacilli</taxon>
        <taxon>Lactobacillales</taxon>
        <taxon>Enterococcaceae</taxon>
        <taxon>Enterococcus</taxon>
    </lineage>
</organism>
<name>RPOY_ENTFA</name>
<evidence type="ECO:0000255" key="1">
    <source>
        <dbReference type="HAMAP-Rule" id="MF_01553"/>
    </source>
</evidence>
<sequence length="70" mass="8537">MIYKVYYQETKIRNPKREDTKSLYMEADSDVIVRQLVEENTPYNIEYVQLLDEKHLAYEQEHADFTLTEF</sequence>
<gene>
    <name evidence="1" type="primary">rpoY</name>
    <name type="ordered locus">EF_2923</name>
</gene>
<feature type="chain" id="PRO_0000163123" description="DNA-directed RNA polymerase subunit epsilon">
    <location>
        <begin position="1"/>
        <end position="70"/>
    </location>
</feature>
<proteinExistence type="inferred from homology"/>
<dbReference type="EC" id="2.7.7.6" evidence="1"/>
<dbReference type="EMBL" id="AE016830">
    <property type="protein sequence ID" value="AAO82611.1"/>
    <property type="molecule type" value="Genomic_DNA"/>
</dbReference>
<dbReference type="RefSeq" id="NP_816541.1">
    <property type="nucleotide sequence ID" value="NC_004668.1"/>
</dbReference>
<dbReference type="RefSeq" id="WP_002355123.1">
    <property type="nucleotide sequence ID" value="NZ_KE136524.1"/>
</dbReference>
<dbReference type="SMR" id="Q82ZX4"/>
<dbReference type="STRING" id="226185.EF_2923"/>
<dbReference type="DNASU" id="1201774"/>
<dbReference type="EnsemblBacteria" id="AAO82611">
    <property type="protein sequence ID" value="AAO82611"/>
    <property type="gene ID" value="EF_2923"/>
</dbReference>
<dbReference type="KEGG" id="efa:EF2923"/>
<dbReference type="PATRIC" id="fig|226185.45.peg.652"/>
<dbReference type="eggNOG" id="COG5503">
    <property type="taxonomic scope" value="Bacteria"/>
</dbReference>
<dbReference type="HOGENOM" id="CLU_187518_0_0_9"/>
<dbReference type="Proteomes" id="UP000001415">
    <property type="component" value="Chromosome"/>
</dbReference>
<dbReference type="GO" id="GO:0000428">
    <property type="term" value="C:DNA-directed RNA polymerase complex"/>
    <property type="evidence" value="ECO:0007669"/>
    <property type="project" value="UniProtKB-KW"/>
</dbReference>
<dbReference type="GO" id="GO:0003677">
    <property type="term" value="F:DNA binding"/>
    <property type="evidence" value="ECO:0007669"/>
    <property type="project" value="UniProtKB-UniRule"/>
</dbReference>
<dbReference type="GO" id="GO:0003899">
    <property type="term" value="F:DNA-directed RNA polymerase activity"/>
    <property type="evidence" value="ECO:0007669"/>
    <property type="project" value="UniProtKB-UniRule"/>
</dbReference>
<dbReference type="GO" id="GO:0006351">
    <property type="term" value="P:DNA-templated transcription"/>
    <property type="evidence" value="ECO:0007669"/>
    <property type="project" value="UniProtKB-UniRule"/>
</dbReference>
<dbReference type="Gene3D" id="3.10.20.730">
    <property type="entry name" value="RNAP, epsilon subunit-like"/>
    <property type="match status" value="1"/>
</dbReference>
<dbReference type="HAMAP" id="MF_01553">
    <property type="entry name" value="RNApol_bact_RpoY"/>
    <property type="match status" value="1"/>
</dbReference>
<dbReference type="InterPro" id="IPR009907">
    <property type="entry name" value="RpoY"/>
</dbReference>
<dbReference type="NCBIfam" id="NF010188">
    <property type="entry name" value="PRK13667.1"/>
    <property type="match status" value="1"/>
</dbReference>
<dbReference type="Pfam" id="PF07288">
    <property type="entry name" value="RpoY"/>
    <property type="match status" value="1"/>
</dbReference>
<accession>Q82ZX4</accession>
<comment type="function">
    <text evidence="1">A non-essential component of RNA polymerase (RNAP).</text>
</comment>
<comment type="catalytic activity">
    <reaction evidence="1">
        <text>RNA(n) + a ribonucleoside 5'-triphosphate = RNA(n+1) + diphosphate</text>
        <dbReference type="Rhea" id="RHEA:21248"/>
        <dbReference type="Rhea" id="RHEA-COMP:14527"/>
        <dbReference type="Rhea" id="RHEA-COMP:17342"/>
        <dbReference type="ChEBI" id="CHEBI:33019"/>
        <dbReference type="ChEBI" id="CHEBI:61557"/>
        <dbReference type="ChEBI" id="CHEBI:140395"/>
        <dbReference type="EC" id="2.7.7.6"/>
    </reaction>
</comment>
<comment type="subunit">
    <text evidence="1">RNAP is composed of a core of 2 alpha, a beta and a beta' subunit. The core is associated with a delta subunit, and at least one of epsilon or omega. When a sigma factor is associated with the core the holoenzyme is formed, which can initiate transcription.</text>
</comment>
<comment type="similarity">
    <text evidence="1">Belongs to the RNA polymerase subunit epsilon family.</text>
</comment>